<name>TBA1_VOLCA</name>
<reference key="1">
    <citation type="journal article" date="1988" name="Mol. Gen. Genet.">
        <title>Organization and structure of Volvox alpha-tubulin genes.</title>
        <authorList>
            <person name="Mages W."/>
            <person name="Salbaum J.M."/>
            <person name="Harper J.F."/>
            <person name="Schmitt R."/>
        </authorList>
    </citation>
    <scope>NUCLEOTIDE SEQUENCE [GENOMIC DNA] (TUBA1)</scope>
    <source>
        <strain>f. Nagariensis</strain>
    </source>
</reference>
<reference key="2">
    <citation type="journal article" date="1995" name="Gene">
        <title>Volvox carteri alpha 2- and beta 2-tubulin-encoding genes: regulatory signals and transcription.</title>
        <authorList>
            <person name="Mages W."/>
            <person name="Cresnar B."/>
            <person name="Harper J.F."/>
            <person name="Bruederlein M."/>
            <person name="Schmitt R."/>
        </authorList>
    </citation>
    <scope>NUCLEOTIDE SEQUENCE [GENOMIC DNA] (TUBA2)</scope>
    <source>
        <strain>f. Nagariensis / HK10</strain>
    </source>
</reference>
<sequence length="451" mass="49556">MREVISIHIGQAGIQVGNACWELYCLEHGIQPDGQMPSDKTIGGGDDAFNTFFSETGAGKHVPRCIFLDLEPTVVDEVRTGTYRQLFHPEQLISGKEDAANNFARGHYTIGKEIVDLALDRIRKLADNCTGLQGFLVFNAVGGGTGSGLGSLLLERLSVDYGKKSKLGFTVYPSPQVSTAVVEPYNSVLSTHSLLEHTDVAVMLDNEAIYDICRRSLDIERPTYTNLNRLIAQVISSLTASLRFDGALNVDVTEFQTNLVPYPRIHFMLSSYAPIISAEKAYHEQLSVAEITNAAFEPASMMVKCDPRHGKYMACCLMYRGDVVPKDVNAAVATIKTKRTIQFVDWCPTGFKCGINYQPPTVVPGGDLAKVQRAVCMISNSTAIGEIFSRLDHKFDLMYAKRAFVHWYVGEGMEEGEFSEAREDLAALEKDFEEVGAESAEGAGEGEGEEY</sequence>
<protein>
    <recommendedName>
        <fullName>Tubulin alpha-1/alpha-2 chain</fullName>
        <ecNumber evidence="2">3.6.5.-</ecNumber>
    </recommendedName>
</protein>
<accession>P11481</accession>
<feature type="chain" id="PRO_0000048236" description="Tubulin alpha-1/alpha-2 chain">
    <location>
        <begin position="1"/>
        <end position="451"/>
    </location>
</feature>
<feature type="active site" evidence="2">
    <location>
        <position position="254"/>
    </location>
</feature>
<feature type="binding site" evidence="2">
    <location>
        <position position="11"/>
    </location>
    <ligand>
        <name>GTP</name>
        <dbReference type="ChEBI" id="CHEBI:37565"/>
    </ligand>
</feature>
<feature type="binding site" evidence="2">
    <location>
        <position position="71"/>
    </location>
    <ligand>
        <name>GTP</name>
        <dbReference type="ChEBI" id="CHEBI:37565"/>
    </ligand>
</feature>
<feature type="binding site" evidence="2">
    <location>
        <position position="71"/>
    </location>
    <ligand>
        <name>Mg(2+)</name>
        <dbReference type="ChEBI" id="CHEBI:18420"/>
    </ligand>
</feature>
<feature type="binding site" evidence="2">
    <location>
        <position position="144"/>
    </location>
    <ligand>
        <name>GTP</name>
        <dbReference type="ChEBI" id="CHEBI:37565"/>
    </ligand>
</feature>
<feature type="binding site" evidence="2">
    <location>
        <position position="145"/>
    </location>
    <ligand>
        <name>GTP</name>
        <dbReference type="ChEBI" id="CHEBI:37565"/>
    </ligand>
</feature>
<feature type="binding site" evidence="2">
    <location>
        <position position="179"/>
    </location>
    <ligand>
        <name>GTP</name>
        <dbReference type="ChEBI" id="CHEBI:37565"/>
    </ligand>
</feature>
<feature type="binding site" evidence="2">
    <location>
        <position position="206"/>
    </location>
    <ligand>
        <name>GTP</name>
        <dbReference type="ChEBI" id="CHEBI:37565"/>
    </ligand>
</feature>
<feature type="binding site" evidence="2">
    <location>
        <position position="228"/>
    </location>
    <ligand>
        <name>GTP</name>
        <dbReference type="ChEBI" id="CHEBI:37565"/>
    </ligand>
</feature>
<feature type="site" description="Involved in polymerization">
    <location>
        <position position="451"/>
    </location>
</feature>
<feature type="modified residue" description="N6-acetyllysine" evidence="1">
    <location>
        <position position="40"/>
    </location>
</feature>
<comment type="function">
    <text>Tubulin is the major constituent of microtubules, a cylinder consisting of laterally associated linear protofilaments composed of alpha- and beta-tubulin heterodimers. Microtubules grow by the addition of GTP-tubulin dimers to the microtubule end, where a stabilizing cap forms. Below the cap, tubulin dimers are in GDP-bound state, owing to GTPase activity of alpha-tubulin.</text>
</comment>
<comment type="catalytic activity">
    <reaction evidence="2">
        <text>GTP + H2O = GDP + phosphate + H(+)</text>
        <dbReference type="Rhea" id="RHEA:19669"/>
        <dbReference type="ChEBI" id="CHEBI:15377"/>
        <dbReference type="ChEBI" id="CHEBI:15378"/>
        <dbReference type="ChEBI" id="CHEBI:37565"/>
        <dbReference type="ChEBI" id="CHEBI:43474"/>
        <dbReference type="ChEBI" id="CHEBI:58189"/>
    </reaction>
    <physiologicalReaction direction="left-to-right" evidence="2">
        <dbReference type="Rhea" id="RHEA:19670"/>
    </physiologicalReaction>
</comment>
<comment type="cofactor">
    <cofactor evidence="2">
        <name>Mg(2+)</name>
        <dbReference type="ChEBI" id="CHEBI:18420"/>
    </cofactor>
</comment>
<comment type="subunit">
    <text>Dimer of alpha and beta chains. A typical microtubule is a hollow water-filled tube with an outer diameter of 25 nm and an inner diameter of 15 nM. Alpha-beta heterodimers associate head-to-tail to form protofilaments running lengthwise along the microtubule wall with the beta-tubulin subunit facing the microtubule plus end conferring a structural polarity. Microtubules usually have 13 protofilaments but different protofilament numbers can be found in some organisms and specialized cells.</text>
</comment>
<comment type="subcellular location">
    <subcellularLocation>
        <location>Cytoplasm</location>
        <location>Cytoskeleton</location>
    </subcellularLocation>
</comment>
<comment type="PTM">
    <text evidence="1">Undergoes a tyrosination/detyrosination cycle, the cyclic removal and re-addition of a C-terminal tyrosine residue by the enzymes tubulin tyrosine carboxypeptidase (TTCP) and tubulin tyrosine ligase (TTL), respectively.</text>
</comment>
<comment type="PTM">
    <text evidence="1">Acetylation of alpha chains at Lys-40 stabilizes microtubules and affects affinity and processivity of microtubule motors. This modification has a role in multiple cellular functions, ranging from cell motility, cell cycle progression or cell differentiation to intracellular trafficking and signaling (By similarity).</text>
</comment>
<comment type="similarity">
    <text evidence="3">Belongs to the tubulin family.</text>
</comment>
<evidence type="ECO:0000250" key="1"/>
<evidence type="ECO:0000250" key="2">
    <source>
        <dbReference type="UniProtKB" id="P68363"/>
    </source>
</evidence>
<evidence type="ECO:0000305" key="3"/>
<organism>
    <name type="scientific">Volvox carteri</name>
    <name type="common">Green alga</name>
    <dbReference type="NCBI Taxonomy" id="3067"/>
    <lineage>
        <taxon>Eukaryota</taxon>
        <taxon>Viridiplantae</taxon>
        <taxon>Chlorophyta</taxon>
        <taxon>core chlorophytes</taxon>
        <taxon>Chlorophyceae</taxon>
        <taxon>CS clade</taxon>
        <taxon>Chlamydomonadales</taxon>
        <taxon>Volvocaceae</taxon>
        <taxon>Volvox</taxon>
    </lineage>
</organism>
<gene>
    <name type="primary">TUBA1</name>
</gene>
<gene>
    <name type="primary">TUBA2</name>
</gene>
<proteinExistence type="inferred from homology"/>
<keyword id="KW-0007">Acetylation</keyword>
<keyword id="KW-0963">Cytoplasm</keyword>
<keyword id="KW-0206">Cytoskeleton</keyword>
<keyword id="KW-0342">GTP-binding</keyword>
<keyword id="KW-0378">Hydrolase</keyword>
<keyword id="KW-0460">Magnesium</keyword>
<keyword id="KW-0479">Metal-binding</keyword>
<keyword id="KW-0493">Microtubule</keyword>
<keyword id="KW-0547">Nucleotide-binding</keyword>
<dbReference type="EC" id="3.6.5.-" evidence="2"/>
<dbReference type="EMBL" id="X12846">
    <property type="protein sequence ID" value="CAA31326.1"/>
    <property type="molecule type" value="Genomic_DNA"/>
</dbReference>
<dbReference type="EMBL" id="L24546">
    <property type="protein sequence ID" value="AAA99438.1"/>
    <property type="molecule type" value="Genomic_DNA"/>
</dbReference>
<dbReference type="PIR" id="S04694">
    <property type="entry name" value="S04694"/>
</dbReference>
<dbReference type="RefSeq" id="XP_002951007.1">
    <property type="nucleotide sequence ID" value="XM_002950961.1"/>
</dbReference>
<dbReference type="RefSeq" id="XP_002957217.1">
    <property type="nucleotide sequence ID" value="XM_002957171.1"/>
</dbReference>
<dbReference type="SMR" id="P11481"/>
<dbReference type="GeneID" id="9616835"/>
<dbReference type="GeneID" id="9626710"/>
<dbReference type="KEGG" id="vcn:VOLCADRAFT_109786"/>
<dbReference type="KEGG" id="vcn:VOLCADRAFT_77526"/>
<dbReference type="OMA" id="WARTRNT"/>
<dbReference type="GO" id="GO:0005737">
    <property type="term" value="C:cytoplasm"/>
    <property type="evidence" value="ECO:0007669"/>
    <property type="project" value="UniProtKB-KW"/>
</dbReference>
<dbReference type="GO" id="GO:0005874">
    <property type="term" value="C:microtubule"/>
    <property type="evidence" value="ECO:0007669"/>
    <property type="project" value="UniProtKB-KW"/>
</dbReference>
<dbReference type="GO" id="GO:0005525">
    <property type="term" value="F:GTP binding"/>
    <property type="evidence" value="ECO:0007669"/>
    <property type="project" value="UniProtKB-KW"/>
</dbReference>
<dbReference type="GO" id="GO:0016787">
    <property type="term" value="F:hydrolase activity"/>
    <property type="evidence" value="ECO:0007669"/>
    <property type="project" value="UniProtKB-KW"/>
</dbReference>
<dbReference type="GO" id="GO:0046872">
    <property type="term" value="F:metal ion binding"/>
    <property type="evidence" value="ECO:0007669"/>
    <property type="project" value="UniProtKB-KW"/>
</dbReference>
<dbReference type="GO" id="GO:0005200">
    <property type="term" value="F:structural constituent of cytoskeleton"/>
    <property type="evidence" value="ECO:0007669"/>
    <property type="project" value="InterPro"/>
</dbReference>
<dbReference type="GO" id="GO:0007017">
    <property type="term" value="P:microtubule-based process"/>
    <property type="evidence" value="ECO:0007669"/>
    <property type="project" value="InterPro"/>
</dbReference>
<dbReference type="CDD" id="cd02186">
    <property type="entry name" value="alpha_tubulin"/>
    <property type="match status" value="1"/>
</dbReference>
<dbReference type="FunFam" id="1.10.287.600:FF:000005">
    <property type="entry name" value="Tubulin alpha chain"/>
    <property type="match status" value="1"/>
</dbReference>
<dbReference type="FunFam" id="3.30.1330.20:FF:000001">
    <property type="entry name" value="Tubulin alpha chain"/>
    <property type="match status" value="1"/>
</dbReference>
<dbReference type="FunFam" id="3.40.50.1440:FF:000004">
    <property type="entry name" value="Tubulin alpha chain"/>
    <property type="match status" value="1"/>
</dbReference>
<dbReference type="Gene3D" id="1.10.287.600">
    <property type="entry name" value="Helix hairpin bin"/>
    <property type="match status" value="1"/>
</dbReference>
<dbReference type="Gene3D" id="3.30.1330.20">
    <property type="entry name" value="Tubulin/FtsZ, C-terminal domain"/>
    <property type="match status" value="1"/>
</dbReference>
<dbReference type="Gene3D" id="3.40.50.1440">
    <property type="entry name" value="Tubulin/FtsZ, GTPase domain"/>
    <property type="match status" value="1"/>
</dbReference>
<dbReference type="InterPro" id="IPR002452">
    <property type="entry name" value="Alpha_tubulin"/>
</dbReference>
<dbReference type="InterPro" id="IPR008280">
    <property type="entry name" value="Tub_FtsZ_C"/>
</dbReference>
<dbReference type="InterPro" id="IPR000217">
    <property type="entry name" value="Tubulin"/>
</dbReference>
<dbReference type="InterPro" id="IPR037103">
    <property type="entry name" value="Tubulin/FtsZ-like_C"/>
</dbReference>
<dbReference type="InterPro" id="IPR018316">
    <property type="entry name" value="Tubulin/FtsZ_2-layer-sand-dom"/>
</dbReference>
<dbReference type="InterPro" id="IPR036525">
    <property type="entry name" value="Tubulin/FtsZ_GTPase_sf"/>
</dbReference>
<dbReference type="InterPro" id="IPR023123">
    <property type="entry name" value="Tubulin_C"/>
</dbReference>
<dbReference type="InterPro" id="IPR017975">
    <property type="entry name" value="Tubulin_CS"/>
</dbReference>
<dbReference type="InterPro" id="IPR003008">
    <property type="entry name" value="Tubulin_FtsZ_GTPase"/>
</dbReference>
<dbReference type="PANTHER" id="PTHR11588">
    <property type="entry name" value="TUBULIN"/>
    <property type="match status" value="1"/>
</dbReference>
<dbReference type="Pfam" id="PF00091">
    <property type="entry name" value="Tubulin"/>
    <property type="match status" value="1"/>
</dbReference>
<dbReference type="Pfam" id="PF03953">
    <property type="entry name" value="Tubulin_C"/>
    <property type="match status" value="1"/>
</dbReference>
<dbReference type="PRINTS" id="PR01162">
    <property type="entry name" value="ALPHATUBULIN"/>
</dbReference>
<dbReference type="PRINTS" id="PR01161">
    <property type="entry name" value="TUBULIN"/>
</dbReference>
<dbReference type="SMART" id="SM00864">
    <property type="entry name" value="Tubulin"/>
    <property type="match status" value="1"/>
</dbReference>
<dbReference type="SMART" id="SM00865">
    <property type="entry name" value="Tubulin_C"/>
    <property type="match status" value="1"/>
</dbReference>
<dbReference type="SUPFAM" id="SSF55307">
    <property type="entry name" value="Tubulin C-terminal domain-like"/>
    <property type="match status" value="1"/>
</dbReference>
<dbReference type="SUPFAM" id="SSF52490">
    <property type="entry name" value="Tubulin nucleotide-binding domain-like"/>
    <property type="match status" value="1"/>
</dbReference>
<dbReference type="PROSITE" id="PS00227">
    <property type="entry name" value="TUBULIN"/>
    <property type="match status" value="1"/>
</dbReference>